<comment type="function">
    <text evidence="1">Involved in the regulation of the intracellular balance of NAD and NADP, and is a key enzyme in the biosynthesis of NADP. Catalyzes specifically the phosphorylation on 2'-hydroxyl of the adenosine moiety of NAD to yield NADP.</text>
</comment>
<comment type="catalytic activity">
    <reaction evidence="1">
        <text>NAD(+) + ATP = ADP + NADP(+) + H(+)</text>
        <dbReference type="Rhea" id="RHEA:18629"/>
        <dbReference type="ChEBI" id="CHEBI:15378"/>
        <dbReference type="ChEBI" id="CHEBI:30616"/>
        <dbReference type="ChEBI" id="CHEBI:57540"/>
        <dbReference type="ChEBI" id="CHEBI:58349"/>
        <dbReference type="ChEBI" id="CHEBI:456216"/>
        <dbReference type="EC" id="2.7.1.23"/>
    </reaction>
</comment>
<comment type="cofactor">
    <cofactor evidence="1">
        <name>a divalent metal cation</name>
        <dbReference type="ChEBI" id="CHEBI:60240"/>
    </cofactor>
</comment>
<comment type="subcellular location">
    <subcellularLocation>
        <location evidence="1">Cytoplasm</location>
    </subcellularLocation>
</comment>
<comment type="similarity">
    <text evidence="1">Belongs to the NAD kinase family.</text>
</comment>
<comment type="sequence caution" evidence="2">
    <conflict type="erroneous initiation">
        <sequence resource="EMBL-CDS" id="AAZ60414"/>
    </conflict>
    <text>Extended N-terminus.</text>
</comment>
<name>NADK_CUPPJ</name>
<evidence type="ECO:0000255" key="1">
    <source>
        <dbReference type="HAMAP-Rule" id="MF_00361"/>
    </source>
</evidence>
<evidence type="ECO:0000305" key="2"/>
<proteinExistence type="inferred from homology"/>
<gene>
    <name evidence="1" type="primary">nadK</name>
    <name type="ordered locus">Reut_A1035</name>
</gene>
<protein>
    <recommendedName>
        <fullName evidence="1">NAD kinase</fullName>
        <ecNumber evidence="1">2.7.1.23</ecNumber>
    </recommendedName>
    <alternativeName>
        <fullName evidence="1">ATP-dependent NAD kinase</fullName>
    </alternativeName>
</protein>
<reference key="1">
    <citation type="journal article" date="2010" name="PLoS ONE">
        <title>The complete multipartite genome sequence of Cupriavidus necator JMP134, a versatile pollutant degrader.</title>
        <authorList>
            <person name="Lykidis A."/>
            <person name="Perez-Pantoja D."/>
            <person name="Ledger T."/>
            <person name="Mavromatis K."/>
            <person name="Anderson I.J."/>
            <person name="Ivanova N.N."/>
            <person name="Hooper S.D."/>
            <person name="Lapidus A."/>
            <person name="Lucas S."/>
            <person name="Gonzalez B."/>
            <person name="Kyrpides N.C."/>
        </authorList>
    </citation>
    <scope>NUCLEOTIDE SEQUENCE [LARGE SCALE GENOMIC DNA]</scope>
    <source>
        <strain>JMP134 / LMG 1197</strain>
    </source>
</reference>
<accession>Q473L9</accession>
<organism>
    <name type="scientific">Cupriavidus pinatubonensis (strain JMP 134 / LMG 1197)</name>
    <name type="common">Cupriavidus necator (strain JMP 134)</name>
    <dbReference type="NCBI Taxonomy" id="264198"/>
    <lineage>
        <taxon>Bacteria</taxon>
        <taxon>Pseudomonadati</taxon>
        <taxon>Pseudomonadota</taxon>
        <taxon>Betaproteobacteria</taxon>
        <taxon>Burkholderiales</taxon>
        <taxon>Burkholderiaceae</taxon>
        <taxon>Cupriavidus</taxon>
    </lineage>
</organism>
<sequence>MSAPQKTSALRTPFKTVALVGRYSTAGIEGPLEELASYILRNGQDVVFERETSLATGLTGYPALTAEEIGREADVAVVLGGDGTLLGIARQLAGHNVPLIGVNHGRLGFMTDIPLEDVQSVLPDMLGGRYEAETRLLLESSVVRDDSPIFSALALNDVVVNRSGISGMVELAVSVDGYFMYNQRSDGLIVSTATGSTAYALSAGGPILHPTLSGLVLVPIAPHSLSNRPIVLPQEAEVTIEVATARDASVNFDMQSLTSLLPGDRIVVRRSKKTIQLLHPVGYNYYATLRKKLHWHEYPTEDNRL</sequence>
<keyword id="KW-0067">ATP-binding</keyword>
<keyword id="KW-0963">Cytoplasm</keyword>
<keyword id="KW-0418">Kinase</keyword>
<keyword id="KW-0520">NAD</keyword>
<keyword id="KW-0521">NADP</keyword>
<keyword id="KW-0547">Nucleotide-binding</keyword>
<keyword id="KW-0808">Transferase</keyword>
<feature type="chain" id="PRO_0000229683" description="NAD kinase">
    <location>
        <begin position="1"/>
        <end position="305"/>
    </location>
</feature>
<feature type="active site" description="Proton acceptor" evidence="1">
    <location>
        <position position="82"/>
    </location>
</feature>
<feature type="binding site" evidence="1">
    <location>
        <begin position="82"/>
        <end position="83"/>
    </location>
    <ligand>
        <name>NAD(+)</name>
        <dbReference type="ChEBI" id="CHEBI:57540"/>
    </ligand>
</feature>
<feature type="binding site" evidence="1">
    <location>
        <begin position="156"/>
        <end position="157"/>
    </location>
    <ligand>
        <name>NAD(+)</name>
        <dbReference type="ChEBI" id="CHEBI:57540"/>
    </ligand>
</feature>
<feature type="binding site" evidence="1">
    <location>
        <position position="184"/>
    </location>
    <ligand>
        <name>NAD(+)</name>
        <dbReference type="ChEBI" id="CHEBI:57540"/>
    </ligand>
</feature>
<feature type="binding site" evidence="1">
    <location>
        <position position="186"/>
    </location>
    <ligand>
        <name>NAD(+)</name>
        <dbReference type="ChEBI" id="CHEBI:57540"/>
    </ligand>
</feature>
<feature type="binding site" evidence="1">
    <location>
        <begin position="197"/>
        <end position="202"/>
    </location>
    <ligand>
        <name>NAD(+)</name>
        <dbReference type="ChEBI" id="CHEBI:57540"/>
    </ligand>
</feature>
<feature type="binding site" evidence="1">
    <location>
        <position position="221"/>
    </location>
    <ligand>
        <name>NAD(+)</name>
        <dbReference type="ChEBI" id="CHEBI:57540"/>
    </ligand>
</feature>
<feature type="binding site" evidence="1">
    <location>
        <position position="255"/>
    </location>
    <ligand>
        <name>NAD(+)</name>
        <dbReference type="ChEBI" id="CHEBI:57540"/>
    </ligand>
</feature>
<dbReference type="EC" id="2.7.1.23" evidence="1"/>
<dbReference type="EMBL" id="CP000090">
    <property type="protein sequence ID" value="AAZ60414.1"/>
    <property type="status" value="ALT_INIT"/>
    <property type="molecule type" value="Genomic_DNA"/>
</dbReference>
<dbReference type="SMR" id="Q473L9"/>
<dbReference type="STRING" id="264198.Reut_A1035"/>
<dbReference type="KEGG" id="reu:Reut_A1035"/>
<dbReference type="eggNOG" id="COG0061">
    <property type="taxonomic scope" value="Bacteria"/>
</dbReference>
<dbReference type="HOGENOM" id="CLU_008831_0_1_4"/>
<dbReference type="OrthoDB" id="9774737at2"/>
<dbReference type="GO" id="GO:0005737">
    <property type="term" value="C:cytoplasm"/>
    <property type="evidence" value="ECO:0007669"/>
    <property type="project" value="UniProtKB-SubCell"/>
</dbReference>
<dbReference type="GO" id="GO:0005524">
    <property type="term" value="F:ATP binding"/>
    <property type="evidence" value="ECO:0007669"/>
    <property type="project" value="UniProtKB-KW"/>
</dbReference>
<dbReference type="GO" id="GO:0046872">
    <property type="term" value="F:metal ion binding"/>
    <property type="evidence" value="ECO:0007669"/>
    <property type="project" value="UniProtKB-UniRule"/>
</dbReference>
<dbReference type="GO" id="GO:0051287">
    <property type="term" value="F:NAD binding"/>
    <property type="evidence" value="ECO:0007669"/>
    <property type="project" value="UniProtKB-ARBA"/>
</dbReference>
<dbReference type="GO" id="GO:0003951">
    <property type="term" value="F:NAD+ kinase activity"/>
    <property type="evidence" value="ECO:0007669"/>
    <property type="project" value="UniProtKB-UniRule"/>
</dbReference>
<dbReference type="GO" id="GO:0019674">
    <property type="term" value="P:NAD metabolic process"/>
    <property type="evidence" value="ECO:0007669"/>
    <property type="project" value="InterPro"/>
</dbReference>
<dbReference type="GO" id="GO:0006741">
    <property type="term" value="P:NADP biosynthetic process"/>
    <property type="evidence" value="ECO:0007669"/>
    <property type="project" value="UniProtKB-UniRule"/>
</dbReference>
<dbReference type="Gene3D" id="3.40.50.10330">
    <property type="entry name" value="Probable inorganic polyphosphate/atp-NAD kinase, domain 1"/>
    <property type="match status" value="1"/>
</dbReference>
<dbReference type="Gene3D" id="2.60.200.30">
    <property type="entry name" value="Probable inorganic polyphosphate/atp-NAD kinase, domain 2"/>
    <property type="match status" value="1"/>
</dbReference>
<dbReference type="HAMAP" id="MF_00361">
    <property type="entry name" value="NAD_kinase"/>
    <property type="match status" value="1"/>
</dbReference>
<dbReference type="InterPro" id="IPR017438">
    <property type="entry name" value="ATP-NAD_kinase_N"/>
</dbReference>
<dbReference type="InterPro" id="IPR017437">
    <property type="entry name" value="ATP-NAD_kinase_PpnK-typ_C"/>
</dbReference>
<dbReference type="InterPro" id="IPR016064">
    <property type="entry name" value="NAD/diacylglycerol_kinase_sf"/>
</dbReference>
<dbReference type="InterPro" id="IPR002504">
    <property type="entry name" value="NADK"/>
</dbReference>
<dbReference type="NCBIfam" id="NF002306">
    <property type="entry name" value="PRK01231.1"/>
    <property type="match status" value="1"/>
</dbReference>
<dbReference type="NCBIfam" id="NF002561">
    <property type="entry name" value="PRK02155.1"/>
    <property type="match status" value="1"/>
</dbReference>
<dbReference type="PANTHER" id="PTHR20275">
    <property type="entry name" value="NAD KINASE"/>
    <property type="match status" value="1"/>
</dbReference>
<dbReference type="PANTHER" id="PTHR20275:SF0">
    <property type="entry name" value="NAD KINASE"/>
    <property type="match status" value="1"/>
</dbReference>
<dbReference type="Pfam" id="PF01513">
    <property type="entry name" value="NAD_kinase"/>
    <property type="match status" value="1"/>
</dbReference>
<dbReference type="Pfam" id="PF20143">
    <property type="entry name" value="NAD_kinase_C"/>
    <property type="match status" value="1"/>
</dbReference>
<dbReference type="SUPFAM" id="SSF111331">
    <property type="entry name" value="NAD kinase/diacylglycerol kinase-like"/>
    <property type="match status" value="1"/>
</dbReference>